<proteinExistence type="inferred from homology"/>
<dbReference type="EC" id="1.1.1.262" evidence="1"/>
<dbReference type="EMBL" id="CP001072">
    <property type="protein sequence ID" value="ACD49031.1"/>
    <property type="molecule type" value="Genomic_DNA"/>
</dbReference>
<dbReference type="RefSeq" id="WP_001075034.1">
    <property type="nucleotide sequence ID" value="NC_010698.2"/>
</dbReference>
<dbReference type="SMR" id="B2UVZ9"/>
<dbReference type="KEGG" id="hps:HPSH_08240"/>
<dbReference type="HOGENOM" id="CLU_040168_0_0_7"/>
<dbReference type="UniPathway" id="UPA00244">
    <property type="reaction ID" value="UER00312"/>
</dbReference>
<dbReference type="GO" id="GO:0005737">
    <property type="term" value="C:cytoplasm"/>
    <property type="evidence" value="ECO:0007669"/>
    <property type="project" value="UniProtKB-SubCell"/>
</dbReference>
<dbReference type="GO" id="GO:0050570">
    <property type="term" value="F:4-hydroxythreonine-4-phosphate dehydrogenase activity"/>
    <property type="evidence" value="ECO:0007669"/>
    <property type="project" value="UniProtKB-UniRule"/>
</dbReference>
<dbReference type="GO" id="GO:0050897">
    <property type="term" value="F:cobalt ion binding"/>
    <property type="evidence" value="ECO:0007669"/>
    <property type="project" value="UniProtKB-UniRule"/>
</dbReference>
<dbReference type="GO" id="GO:0000287">
    <property type="term" value="F:magnesium ion binding"/>
    <property type="evidence" value="ECO:0007669"/>
    <property type="project" value="UniProtKB-UniRule"/>
</dbReference>
<dbReference type="GO" id="GO:0051287">
    <property type="term" value="F:NAD binding"/>
    <property type="evidence" value="ECO:0007669"/>
    <property type="project" value="InterPro"/>
</dbReference>
<dbReference type="GO" id="GO:0008270">
    <property type="term" value="F:zinc ion binding"/>
    <property type="evidence" value="ECO:0007669"/>
    <property type="project" value="UniProtKB-UniRule"/>
</dbReference>
<dbReference type="GO" id="GO:0042823">
    <property type="term" value="P:pyridoxal phosphate biosynthetic process"/>
    <property type="evidence" value="ECO:0007669"/>
    <property type="project" value="UniProtKB-UniRule"/>
</dbReference>
<dbReference type="GO" id="GO:0008615">
    <property type="term" value="P:pyridoxine biosynthetic process"/>
    <property type="evidence" value="ECO:0007669"/>
    <property type="project" value="UniProtKB-UniRule"/>
</dbReference>
<dbReference type="Gene3D" id="3.40.718.10">
    <property type="entry name" value="Isopropylmalate Dehydrogenase"/>
    <property type="match status" value="1"/>
</dbReference>
<dbReference type="HAMAP" id="MF_02086">
    <property type="entry name" value="PdxA_Epsilonprot"/>
    <property type="match status" value="1"/>
</dbReference>
<dbReference type="InterPro" id="IPR037539">
    <property type="entry name" value="PdxA_epsilonprot"/>
</dbReference>
<dbReference type="InterPro" id="IPR005255">
    <property type="entry name" value="PdxA_fam"/>
</dbReference>
<dbReference type="NCBIfam" id="TIGR00557">
    <property type="entry name" value="pdxA"/>
    <property type="match status" value="1"/>
</dbReference>
<dbReference type="NCBIfam" id="NF003040">
    <property type="entry name" value="PRK03946.1"/>
    <property type="match status" value="1"/>
</dbReference>
<dbReference type="PANTHER" id="PTHR30004">
    <property type="entry name" value="4-HYDROXYTHREONINE-4-PHOSPHATE DEHYDROGENASE"/>
    <property type="match status" value="1"/>
</dbReference>
<dbReference type="PANTHER" id="PTHR30004:SF6">
    <property type="entry name" value="D-THREONATE 4-PHOSPHATE DEHYDROGENASE"/>
    <property type="match status" value="1"/>
</dbReference>
<dbReference type="Pfam" id="PF04166">
    <property type="entry name" value="PdxA"/>
    <property type="match status" value="1"/>
</dbReference>
<dbReference type="SUPFAM" id="SSF53659">
    <property type="entry name" value="Isocitrate/Isopropylmalate dehydrogenase-like"/>
    <property type="match status" value="1"/>
</dbReference>
<organism>
    <name type="scientific">Helicobacter pylori (strain Shi470)</name>
    <dbReference type="NCBI Taxonomy" id="512562"/>
    <lineage>
        <taxon>Bacteria</taxon>
        <taxon>Pseudomonadati</taxon>
        <taxon>Campylobacterota</taxon>
        <taxon>Epsilonproteobacteria</taxon>
        <taxon>Campylobacterales</taxon>
        <taxon>Helicobacteraceae</taxon>
        <taxon>Helicobacter</taxon>
    </lineage>
</organism>
<accession>B2UVZ9</accession>
<sequence length="307" mass="33697">MAKKKIAISCGDIQGVGLELILKSHKEVSALCEPLYLIDSELLERANQLLNNAYETKTLNTLAINAPLPLLNSGTIGKVSAQSGAYSFESFKKACELADDKEVDGICTLPINKLAWQQAQIPFVGHTDFLKQRYKDHQIIMMLGCFRLFVGLFSDHVPLGAVSQLIQVKALVRFLLAFQKSTQAKIIQVCGFNPHAGEEGLFGKEDAKILKAIQKSNQTLGFECFLGPLPADSAFAPNKRKITPFYVSMSHDVGLAPLKALYFDESINVSLNAPILRASTDHGTAFDIAYQNKANNKSYVNAIKYLA</sequence>
<gene>
    <name evidence="1" type="primary">pdxA</name>
    <name type="ordered locus">HPSH_08240</name>
</gene>
<evidence type="ECO:0000255" key="1">
    <source>
        <dbReference type="HAMAP-Rule" id="MF_02086"/>
    </source>
</evidence>
<comment type="function">
    <text evidence="1">Catalyzes the NAD(P)-dependent oxidation of 4-(phosphooxy)-L-threonine (HTP) into 2-amino-3-oxo-4-(phosphooxy)butyric acid which spontaneously decarboxylates to form 3-amino-2-oxopropyl phosphate (AHAP).</text>
</comment>
<comment type="catalytic activity">
    <reaction evidence="1">
        <text>4-(phosphooxy)-L-threonine + NAD(+) = 3-amino-2-oxopropyl phosphate + CO2 + NADH</text>
        <dbReference type="Rhea" id="RHEA:32275"/>
        <dbReference type="ChEBI" id="CHEBI:16526"/>
        <dbReference type="ChEBI" id="CHEBI:57279"/>
        <dbReference type="ChEBI" id="CHEBI:57540"/>
        <dbReference type="ChEBI" id="CHEBI:57945"/>
        <dbReference type="ChEBI" id="CHEBI:58452"/>
        <dbReference type="EC" id="1.1.1.262"/>
    </reaction>
</comment>
<comment type="cofactor">
    <cofactor evidence="1">
        <name>Zn(2+)</name>
        <dbReference type="ChEBI" id="CHEBI:29105"/>
    </cofactor>
    <cofactor evidence="1">
        <name>Mg(2+)</name>
        <dbReference type="ChEBI" id="CHEBI:18420"/>
    </cofactor>
    <cofactor evidence="1">
        <name>Co(2+)</name>
        <dbReference type="ChEBI" id="CHEBI:48828"/>
    </cofactor>
</comment>
<comment type="pathway">
    <text evidence="1">Cofactor biosynthesis; pyridoxine 5'-phosphate biosynthesis; pyridoxine 5'-phosphate from D-erythrose 4-phosphate: step 4/5.</text>
</comment>
<comment type="subunit">
    <text evidence="1">Homodimer.</text>
</comment>
<comment type="subcellular location">
    <subcellularLocation>
        <location evidence="1">Cytoplasm</location>
    </subcellularLocation>
</comment>
<comment type="miscellaneous">
    <text evidence="1">The active site is located at the dimer interface.</text>
</comment>
<comment type="similarity">
    <text evidence="1">Belongs to the PdxA family.</text>
</comment>
<feature type="chain" id="PRO_1000128253" description="4-hydroxythreonine-4-phosphate dehydrogenase">
    <location>
        <begin position="1"/>
        <end position="307"/>
    </location>
</feature>
<feature type="binding site" evidence="1">
    <location>
        <position position="126"/>
    </location>
    <ligand>
        <name>substrate</name>
    </ligand>
</feature>
<feature type="binding site" evidence="1">
    <location>
        <position position="127"/>
    </location>
    <ligand>
        <name>substrate</name>
    </ligand>
</feature>
<feature type="binding site" evidence="1">
    <location>
        <position position="156"/>
    </location>
    <ligand>
        <name>a divalent metal cation</name>
        <dbReference type="ChEBI" id="CHEBI:60240"/>
        <note>ligand shared between dimeric partners</note>
    </ligand>
</feature>
<feature type="binding site" evidence="1">
    <location>
        <position position="195"/>
    </location>
    <ligand>
        <name>a divalent metal cation</name>
        <dbReference type="ChEBI" id="CHEBI:60240"/>
        <note>ligand shared between dimeric partners</note>
    </ligand>
</feature>
<feature type="binding site" evidence="1">
    <location>
        <position position="251"/>
    </location>
    <ligand>
        <name>a divalent metal cation</name>
        <dbReference type="ChEBI" id="CHEBI:60240"/>
        <note>ligand shared between dimeric partners</note>
    </ligand>
</feature>
<feature type="binding site" evidence="1">
    <location>
        <position position="259"/>
    </location>
    <ligand>
        <name>substrate</name>
    </ligand>
</feature>
<feature type="binding site" evidence="1">
    <location>
        <position position="268"/>
    </location>
    <ligand>
        <name>substrate</name>
    </ligand>
</feature>
<feature type="binding site" evidence="1">
    <location>
        <position position="277"/>
    </location>
    <ligand>
        <name>substrate</name>
    </ligand>
</feature>
<name>PDXA_HELPS</name>
<reference key="1">
    <citation type="submission" date="2008-05" db="EMBL/GenBank/DDBJ databases">
        <title>Genome sequence of Helicobacter pylori from the remote Amazon: traces of Asian ancestry of the first Americans.</title>
        <authorList>
            <person name="Kersulyte D."/>
            <person name="Kalia A."/>
            <person name="Gilman R.H."/>
            <person name="Berg D.E."/>
        </authorList>
    </citation>
    <scope>NUCLEOTIDE SEQUENCE [LARGE SCALE GENOMIC DNA]</scope>
    <source>
        <strain>Shi470</strain>
    </source>
</reference>
<keyword id="KW-0170">Cobalt</keyword>
<keyword id="KW-0963">Cytoplasm</keyword>
<keyword id="KW-0460">Magnesium</keyword>
<keyword id="KW-0479">Metal-binding</keyword>
<keyword id="KW-0520">NAD</keyword>
<keyword id="KW-0521">NADP</keyword>
<keyword id="KW-0560">Oxidoreductase</keyword>
<keyword id="KW-0664">Pyridoxine biosynthesis</keyword>
<keyword id="KW-0862">Zinc</keyword>
<protein>
    <recommendedName>
        <fullName evidence="1">4-hydroxythreonine-4-phosphate dehydrogenase</fullName>
        <ecNumber evidence="1">1.1.1.262</ecNumber>
    </recommendedName>
    <alternativeName>
        <fullName evidence="1">4-(phosphohydroxy)-L-threonine dehydrogenase</fullName>
    </alternativeName>
</protein>